<organism>
    <name type="scientific">Cupriavidus metallidurans (strain ATCC 43123 / DSM 2839 / NBRC 102507 / CH34)</name>
    <name type="common">Ralstonia metallidurans</name>
    <dbReference type="NCBI Taxonomy" id="266264"/>
    <lineage>
        <taxon>Bacteria</taxon>
        <taxon>Pseudomonadati</taxon>
        <taxon>Pseudomonadota</taxon>
        <taxon>Betaproteobacteria</taxon>
        <taxon>Burkholderiales</taxon>
        <taxon>Burkholderiaceae</taxon>
        <taxon>Cupriavidus</taxon>
    </lineage>
</organism>
<reference key="1">
    <citation type="journal article" date="2010" name="PLoS ONE">
        <title>The complete genome sequence of Cupriavidus metallidurans strain CH34, a master survivalist in harsh and anthropogenic environments.</title>
        <authorList>
            <person name="Janssen P.J."/>
            <person name="Van Houdt R."/>
            <person name="Moors H."/>
            <person name="Monsieurs P."/>
            <person name="Morin N."/>
            <person name="Michaux A."/>
            <person name="Benotmane M.A."/>
            <person name="Leys N."/>
            <person name="Vallaeys T."/>
            <person name="Lapidus A."/>
            <person name="Monchy S."/>
            <person name="Medigue C."/>
            <person name="Taghavi S."/>
            <person name="McCorkle S."/>
            <person name="Dunn J."/>
            <person name="van der Lelie D."/>
            <person name="Mergeay M."/>
        </authorList>
    </citation>
    <scope>NUCLEOTIDE SEQUENCE [LARGE SCALE GENOMIC DNA]</scope>
    <source>
        <strain>ATCC 43123 / DSM 2839 / NBRC 102507 / CH34</strain>
    </source>
</reference>
<protein>
    <recommendedName>
        <fullName evidence="1">Pyridoxine 5'-phosphate synthase</fullName>
        <shortName evidence="1">PNP synthase</shortName>
        <ecNumber evidence="1">2.6.99.2</ecNumber>
    </recommendedName>
</protein>
<keyword id="KW-0963">Cytoplasm</keyword>
<keyword id="KW-0664">Pyridoxine biosynthesis</keyword>
<keyword id="KW-1185">Reference proteome</keyword>
<keyword id="KW-0808">Transferase</keyword>
<evidence type="ECO:0000255" key="1">
    <source>
        <dbReference type="HAMAP-Rule" id="MF_00279"/>
    </source>
</evidence>
<dbReference type="EC" id="2.6.99.2" evidence="1"/>
<dbReference type="EMBL" id="CP000352">
    <property type="protein sequence ID" value="ABF09292.1"/>
    <property type="molecule type" value="Genomic_DNA"/>
</dbReference>
<dbReference type="RefSeq" id="WP_011517010.1">
    <property type="nucleotide sequence ID" value="NC_007973.1"/>
</dbReference>
<dbReference type="SMR" id="Q1LKN4"/>
<dbReference type="STRING" id="266264.Rmet_2415"/>
<dbReference type="KEGG" id="rme:Rmet_2415"/>
<dbReference type="eggNOG" id="COG0854">
    <property type="taxonomic scope" value="Bacteria"/>
</dbReference>
<dbReference type="HOGENOM" id="CLU_074563_0_0_4"/>
<dbReference type="UniPathway" id="UPA00244">
    <property type="reaction ID" value="UER00313"/>
</dbReference>
<dbReference type="Proteomes" id="UP000002429">
    <property type="component" value="Chromosome"/>
</dbReference>
<dbReference type="GO" id="GO:0005829">
    <property type="term" value="C:cytosol"/>
    <property type="evidence" value="ECO:0007669"/>
    <property type="project" value="TreeGrafter"/>
</dbReference>
<dbReference type="GO" id="GO:0033856">
    <property type="term" value="F:pyridoxine 5'-phosphate synthase activity"/>
    <property type="evidence" value="ECO:0007669"/>
    <property type="project" value="UniProtKB-EC"/>
</dbReference>
<dbReference type="GO" id="GO:0008615">
    <property type="term" value="P:pyridoxine biosynthetic process"/>
    <property type="evidence" value="ECO:0007669"/>
    <property type="project" value="UniProtKB-UniRule"/>
</dbReference>
<dbReference type="CDD" id="cd00003">
    <property type="entry name" value="PNPsynthase"/>
    <property type="match status" value="1"/>
</dbReference>
<dbReference type="FunFam" id="3.20.20.70:FF:000042">
    <property type="entry name" value="Pyridoxine 5'-phosphate synthase"/>
    <property type="match status" value="1"/>
</dbReference>
<dbReference type="Gene3D" id="3.20.20.70">
    <property type="entry name" value="Aldolase class I"/>
    <property type="match status" value="1"/>
</dbReference>
<dbReference type="HAMAP" id="MF_00279">
    <property type="entry name" value="PdxJ"/>
    <property type="match status" value="1"/>
</dbReference>
<dbReference type="InterPro" id="IPR013785">
    <property type="entry name" value="Aldolase_TIM"/>
</dbReference>
<dbReference type="InterPro" id="IPR004569">
    <property type="entry name" value="PyrdxlP_synth_PdxJ"/>
</dbReference>
<dbReference type="InterPro" id="IPR036130">
    <property type="entry name" value="Pyridoxine-5'_phos_synth"/>
</dbReference>
<dbReference type="NCBIfam" id="TIGR00559">
    <property type="entry name" value="pdxJ"/>
    <property type="match status" value="1"/>
</dbReference>
<dbReference type="NCBIfam" id="NF003623">
    <property type="entry name" value="PRK05265.1-1"/>
    <property type="match status" value="1"/>
</dbReference>
<dbReference type="NCBIfam" id="NF003624">
    <property type="entry name" value="PRK05265.1-2"/>
    <property type="match status" value="1"/>
</dbReference>
<dbReference type="NCBIfam" id="NF003625">
    <property type="entry name" value="PRK05265.1-3"/>
    <property type="match status" value="1"/>
</dbReference>
<dbReference type="NCBIfam" id="NF003627">
    <property type="entry name" value="PRK05265.1-5"/>
    <property type="match status" value="1"/>
</dbReference>
<dbReference type="PANTHER" id="PTHR30456">
    <property type="entry name" value="PYRIDOXINE 5'-PHOSPHATE SYNTHASE"/>
    <property type="match status" value="1"/>
</dbReference>
<dbReference type="PANTHER" id="PTHR30456:SF0">
    <property type="entry name" value="PYRIDOXINE 5'-PHOSPHATE SYNTHASE"/>
    <property type="match status" value="1"/>
</dbReference>
<dbReference type="Pfam" id="PF03740">
    <property type="entry name" value="PdxJ"/>
    <property type="match status" value="1"/>
</dbReference>
<dbReference type="SUPFAM" id="SSF63892">
    <property type="entry name" value="Pyridoxine 5'-phosphate synthase"/>
    <property type="match status" value="1"/>
</dbReference>
<proteinExistence type="inferred from homology"/>
<name>PDXJ_CUPMC</name>
<sequence length="260" mass="27905">MIFHANPGVIDLGVNIDHVATLRNARGTVYPDPIQAALQAEEAGADLITLHLREDRRHIRDADVRALRPKLATRMNLECAITSEMLDIACEIKPQDVCLVPEKREEVTTEGGLDVAGHFEQVSAACRQLADAGIRVSLFIDADPDQIAAAAACKAPVIEIHTGRYADAHTAEEQAAEFRRVAAGVEAGQKHGLIVNAGHGLHYTNVQPIAALPGIKELNIGHAIVAHAVFAGWQNAVREMKAIMVAARLGTRYPVPGQPA</sequence>
<gene>
    <name evidence="1" type="primary">pdxJ</name>
    <name type="ordered locus">Rmet_2415</name>
</gene>
<comment type="function">
    <text evidence="1">Catalyzes the complicated ring closure reaction between the two acyclic compounds 1-deoxy-D-xylulose-5-phosphate (DXP) and 3-amino-2-oxopropyl phosphate (1-amino-acetone-3-phosphate or AAP) to form pyridoxine 5'-phosphate (PNP) and inorganic phosphate.</text>
</comment>
<comment type="catalytic activity">
    <reaction evidence="1">
        <text>3-amino-2-oxopropyl phosphate + 1-deoxy-D-xylulose 5-phosphate = pyridoxine 5'-phosphate + phosphate + 2 H2O + H(+)</text>
        <dbReference type="Rhea" id="RHEA:15265"/>
        <dbReference type="ChEBI" id="CHEBI:15377"/>
        <dbReference type="ChEBI" id="CHEBI:15378"/>
        <dbReference type="ChEBI" id="CHEBI:43474"/>
        <dbReference type="ChEBI" id="CHEBI:57279"/>
        <dbReference type="ChEBI" id="CHEBI:57792"/>
        <dbReference type="ChEBI" id="CHEBI:58589"/>
        <dbReference type="EC" id="2.6.99.2"/>
    </reaction>
</comment>
<comment type="pathway">
    <text evidence="1">Cofactor biosynthesis; pyridoxine 5'-phosphate biosynthesis; pyridoxine 5'-phosphate from D-erythrose 4-phosphate: step 5/5.</text>
</comment>
<comment type="subunit">
    <text evidence="1">Homooctamer; tetramer of dimers.</text>
</comment>
<comment type="subcellular location">
    <subcellularLocation>
        <location evidence="1">Cytoplasm</location>
    </subcellularLocation>
</comment>
<comment type="similarity">
    <text evidence="1">Belongs to the PNP synthase family.</text>
</comment>
<feature type="chain" id="PRO_1000114825" description="Pyridoxine 5'-phosphate synthase">
    <location>
        <begin position="1"/>
        <end position="260"/>
    </location>
</feature>
<feature type="active site" description="Proton acceptor" evidence="1">
    <location>
        <position position="51"/>
    </location>
</feature>
<feature type="active site" description="Proton acceptor" evidence="1">
    <location>
        <position position="78"/>
    </location>
</feature>
<feature type="active site" description="Proton donor" evidence="1">
    <location>
        <position position="199"/>
    </location>
</feature>
<feature type="binding site" evidence="1">
    <location>
        <position position="15"/>
    </location>
    <ligand>
        <name>3-amino-2-oxopropyl phosphate</name>
        <dbReference type="ChEBI" id="CHEBI:57279"/>
    </ligand>
</feature>
<feature type="binding site" evidence="1">
    <location>
        <begin position="17"/>
        <end position="18"/>
    </location>
    <ligand>
        <name>1-deoxy-D-xylulose 5-phosphate</name>
        <dbReference type="ChEBI" id="CHEBI:57792"/>
    </ligand>
</feature>
<feature type="binding site" evidence="1">
    <location>
        <position position="26"/>
    </location>
    <ligand>
        <name>3-amino-2-oxopropyl phosphate</name>
        <dbReference type="ChEBI" id="CHEBI:57279"/>
    </ligand>
</feature>
<feature type="binding site" evidence="1">
    <location>
        <position position="53"/>
    </location>
    <ligand>
        <name>1-deoxy-D-xylulose 5-phosphate</name>
        <dbReference type="ChEBI" id="CHEBI:57792"/>
    </ligand>
</feature>
<feature type="binding site" evidence="1">
    <location>
        <position position="58"/>
    </location>
    <ligand>
        <name>1-deoxy-D-xylulose 5-phosphate</name>
        <dbReference type="ChEBI" id="CHEBI:57792"/>
    </ligand>
</feature>
<feature type="binding site" evidence="1">
    <location>
        <position position="108"/>
    </location>
    <ligand>
        <name>1-deoxy-D-xylulose 5-phosphate</name>
        <dbReference type="ChEBI" id="CHEBI:57792"/>
    </ligand>
</feature>
<feature type="binding site" evidence="1">
    <location>
        <position position="200"/>
    </location>
    <ligand>
        <name>3-amino-2-oxopropyl phosphate</name>
        <dbReference type="ChEBI" id="CHEBI:57279"/>
    </ligand>
</feature>
<feature type="binding site" evidence="1">
    <location>
        <begin position="221"/>
        <end position="222"/>
    </location>
    <ligand>
        <name>3-amino-2-oxopropyl phosphate</name>
        <dbReference type="ChEBI" id="CHEBI:57279"/>
    </ligand>
</feature>
<feature type="site" description="Transition state stabilizer" evidence="1">
    <location>
        <position position="159"/>
    </location>
</feature>
<accession>Q1LKN4</accession>